<sequence>MFKEIFTRLIRHLPSRLVHRDPLPGAQQTVNTVVPPSLSAHCLKMAVMPEEELWKTFDTHPEGLNQAEVESAREQHGENKLPAQQPSPWWVHLWVCYRNPFNILLTILGAISYATEDLFAAGVIALMVAISTLLNFIQEARSTKAADALKAMVSNTATVLRVINDKGENGWLEIPIDQLVPGDIIKLAAGDMIPADLRILQARDLFVAQASLTGESLPVEKAATTRQPEHSNPLECDTLCFMGTTVVSGTAQAMVIATGANTWFGQLAGRVSEQESEPNAFQQGISRVSMLLIRFMLVMAPVVLLINGYTKGDWWEAALFALSVAVGLTPEMLPMIVTSTLARGAVKLSKQKVIVKHLDAIQNFGAMDILCTDKTGTLTQDKIVLENHTDISGKTSERVLHSAWLNSHYQTGLKNLLDTAVLEGTDEESARSLASRWQKIDEIPFDFERRRMSVVVAENTEHHQLVCKGALQEILNVCSQVRHNGEIVPLDDIMLRKIKRVTDTLNRQGLRVVAVATKYLPAREGDYQRADESDLILEGYIAFLDPPKETTAPALKALKASGITVKILTGDSELVAAKVCHEVGLDAGEVVIGSDIETLSDDELANLAQRTTLFARLTPMHKERIVTLLKREGHVVGFMGDGINDAPALRAADIGISVDGAVDIAREAADIILLEKSLMVLEEGVIEGRRTFANMLKYIKMTASSNFGNVFSVLVASAFLPFLPMLPLHLLIQNLLYDVSQVAIPFDNVDDEQIQKPQRWNPADLGRFMIFFGPISSIFDILTFCLMWWVFHANTPETQTLFQSGWFVVGLLSQTLIVHMIRTRRVPFIQSCASWPLMIMTVIVMIVGIALPFSPLASYLQLQALPLSYFPWLVAILAGYMTLTQLVKGFYSRRYGWQ</sequence>
<reference key="1">
    <citation type="journal article" date="1995" name="Nucleic Acids Res.">
        <title>Analysis of the Escherichia coli genome VI: DNA sequence of the region from 92.8 through 100 minutes.</title>
        <authorList>
            <person name="Burland V.D."/>
            <person name="Plunkett G. III"/>
            <person name="Sofia H.J."/>
            <person name="Daniels D.L."/>
            <person name="Blattner F.R."/>
        </authorList>
    </citation>
    <scope>NUCLEOTIDE SEQUENCE [LARGE SCALE GENOMIC DNA]</scope>
    <source>
        <strain>K12 / MG1655 / ATCC 47076</strain>
    </source>
</reference>
<reference key="2">
    <citation type="journal article" date="1997" name="Science">
        <title>The complete genome sequence of Escherichia coli K-12.</title>
        <authorList>
            <person name="Blattner F.R."/>
            <person name="Plunkett G. III"/>
            <person name="Bloch C.A."/>
            <person name="Perna N.T."/>
            <person name="Burland V."/>
            <person name="Riley M."/>
            <person name="Collado-Vides J."/>
            <person name="Glasner J.D."/>
            <person name="Rode C.K."/>
            <person name="Mayhew G.F."/>
            <person name="Gregor J."/>
            <person name="Davis N.W."/>
            <person name="Kirkpatrick H.A."/>
            <person name="Goeden M.A."/>
            <person name="Rose D.J."/>
            <person name="Mau B."/>
            <person name="Shao Y."/>
        </authorList>
    </citation>
    <scope>NUCLEOTIDE SEQUENCE [LARGE SCALE GENOMIC DNA]</scope>
    <scope>SEQUENCE REVISION TO 301-317</scope>
    <source>
        <strain>K12 / MG1655 / ATCC 47076</strain>
    </source>
</reference>
<reference key="3">
    <citation type="journal article" date="2006" name="Mol. Syst. Biol.">
        <title>Highly accurate genome sequences of Escherichia coli K-12 strains MG1655 and W3110.</title>
        <authorList>
            <person name="Hayashi K."/>
            <person name="Morooka N."/>
            <person name="Yamamoto Y."/>
            <person name="Fujita K."/>
            <person name="Isono K."/>
            <person name="Choi S."/>
            <person name="Ohtsubo E."/>
            <person name="Baba T."/>
            <person name="Wanner B.L."/>
            <person name="Mori H."/>
            <person name="Horiuchi T."/>
        </authorList>
    </citation>
    <scope>NUCLEOTIDE SEQUENCE [LARGE SCALE GENOMIC DNA]</scope>
    <source>
        <strain>K12 / W3110 / ATCC 27325 / DSM 5911</strain>
    </source>
</reference>
<reference key="4">
    <citation type="journal article" date="2003" name="J. Bacteriol.">
        <title>Identification and molecular characterization of the Mg2+ stimulon of Escherichia coli.</title>
        <authorList>
            <person name="Minagawa S."/>
            <person name="Ogasawara H."/>
            <person name="Kato A."/>
            <person name="Yamamoto K."/>
            <person name="Eguchi Y."/>
            <person name="Oshima T."/>
            <person name="Mori H."/>
            <person name="Ishihama A."/>
            <person name="Utsumi R."/>
        </authorList>
    </citation>
    <scope>INDUCTION</scope>
    <source>
        <strain>K12</strain>
    </source>
</reference>
<reference key="5">
    <citation type="journal article" date="2005" name="Science">
        <title>Global topology analysis of the Escherichia coli inner membrane proteome.</title>
        <authorList>
            <person name="Daley D.O."/>
            <person name="Rapp M."/>
            <person name="Granseth E."/>
            <person name="Melen K."/>
            <person name="Drew D."/>
            <person name="von Heijne G."/>
        </authorList>
    </citation>
    <scope>SUBCELLULAR LOCATION</scope>
    <source>
        <strain>K12 / MG1655 / ATCC 47076</strain>
    </source>
</reference>
<reference key="6">
    <citation type="journal article" date="2017" name="Proc. Natl. Acad. Sci. U.S.A.">
        <title>Increasing intracellular magnesium levels with the 31-amino acid MgtS protein.</title>
        <authorList>
            <person name="Wang H."/>
            <person name="Yin X."/>
            <person name="Wu Orr M."/>
            <person name="Dambach M."/>
            <person name="Curtis R."/>
            <person name="Storz G."/>
        </authorList>
    </citation>
    <scope>ACTIVITY REGULATION</scope>
    <scope>INTERACTION WITH MGTS</scope>
    <source>
        <strain>K12 / MG1655 / ATCC 47076</strain>
    </source>
</reference>
<reference key="7">
    <citation type="journal article" date="2009" name="Acta Crystallogr. D">
        <title>The structure of Mg-ATPase nucleotide-binding domain at 1.6 A resolution reveals a unique ATP-binding motif.</title>
        <authorList>
            <person name="Hakansson K.O."/>
        </authorList>
    </citation>
    <scope>X-RAY CRYSTALLOGRAPHY (1.6 ANGSTROMS) OF 383-545</scope>
</reference>
<gene>
    <name type="primary">mgtA</name>
    <name type="synonym">corB</name>
    <name type="synonym">mgt</name>
    <name type="ordered locus">b4242</name>
    <name type="ordered locus">JW4201</name>
</gene>
<name>ATMA_ECOLI</name>
<accession>P0ABB8</accession>
<accession>P39168</accession>
<accession>Q2M665</accession>
<protein>
    <recommendedName>
        <fullName>Magnesium-transporting ATPase, P-type 1</fullName>
        <ecNumber evidence="2">7.2.2.14</ecNumber>
    </recommendedName>
    <alternativeName>
        <fullName>Mg(2+) transport ATPase, P-type 1</fullName>
    </alternativeName>
</protein>
<feature type="chain" id="PRO_0000046182" description="Magnesium-transporting ATPase, P-type 1">
    <location>
        <begin position="1"/>
        <end position="898"/>
    </location>
</feature>
<feature type="topological domain" description="Cytoplasmic" evidence="3">
    <location>
        <begin position="1"/>
        <end position="94"/>
    </location>
</feature>
<feature type="transmembrane region" description="Helical; Name=1" evidence="3">
    <location>
        <begin position="95"/>
        <end position="115"/>
    </location>
</feature>
<feature type="topological domain" description="Extracellular" evidence="3">
    <location>
        <position position="116"/>
    </location>
</feature>
<feature type="transmembrane region" description="Helical; Name=2" evidence="3">
    <location>
        <begin position="117"/>
        <end position="137"/>
    </location>
</feature>
<feature type="topological domain" description="Cytoplasmic" evidence="3">
    <location>
        <begin position="138"/>
        <end position="287"/>
    </location>
</feature>
<feature type="transmembrane region" description="Helical; Name=3" evidence="3">
    <location>
        <begin position="288"/>
        <end position="308"/>
    </location>
</feature>
<feature type="topological domain" description="Extracellular" evidence="3">
    <location>
        <begin position="309"/>
        <end position="317"/>
    </location>
</feature>
<feature type="transmembrane region" description="Helical; Name=4" evidence="3">
    <location>
        <begin position="318"/>
        <end position="335"/>
    </location>
</feature>
<feature type="topological domain" description="Cytoplasmic" evidence="3">
    <location>
        <begin position="336"/>
        <end position="695"/>
    </location>
</feature>
<feature type="transmembrane region" description="Helical; Name=5" evidence="3">
    <location>
        <begin position="696"/>
        <end position="715"/>
    </location>
</feature>
<feature type="topological domain" description="Extracellular" evidence="3">
    <location>
        <begin position="716"/>
        <end position="724"/>
    </location>
</feature>
<feature type="transmembrane region" description="Helical; Name=6" evidence="3">
    <location>
        <begin position="725"/>
        <end position="744"/>
    </location>
</feature>
<feature type="topological domain" description="Cytoplasmic" evidence="3">
    <location>
        <begin position="745"/>
        <end position="766"/>
    </location>
</feature>
<feature type="transmembrane region" description="Helical; Name=7" evidence="3">
    <location>
        <begin position="767"/>
        <end position="790"/>
    </location>
</feature>
<feature type="topological domain" description="Extracellular" evidence="3">
    <location>
        <begin position="791"/>
        <end position="799"/>
    </location>
</feature>
<feature type="transmembrane region" description="Helical; Name=8" evidence="3">
    <location>
        <begin position="800"/>
        <end position="818"/>
    </location>
</feature>
<feature type="topological domain" description="Cytoplasmic" evidence="3">
    <location>
        <begin position="819"/>
        <end position="831"/>
    </location>
</feature>
<feature type="transmembrane region" description="Helical; Name=9" evidence="3">
    <location>
        <begin position="832"/>
        <end position="851"/>
    </location>
</feature>
<feature type="topological domain" description="Extracellular" evidence="3">
    <location>
        <begin position="852"/>
        <end position="866"/>
    </location>
</feature>
<feature type="transmembrane region" description="Helical; Name=10" evidence="3">
    <location>
        <begin position="867"/>
        <end position="886"/>
    </location>
</feature>
<feature type="topological domain" description="Cytoplasmic" evidence="3">
    <location>
        <begin position="887"/>
        <end position="898"/>
    </location>
</feature>
<feature type="active site" description="4-aspartylphosphate intermediate" evidence="1">
    <location>
        <position position="373"/>
    </location>
</feature>
<feature type="binding site" evidence="3">
    <location>
        <position position="331"/>
    </location>
    <ligand>
        <name>Mg(2+)</name>
        <dbReference type="ChEBI" id="CHEBI:18420"/>
    </ligand>
</feature>
<feature type="binding site" evidence="1">
    <location>
        <position position="641"/>
    </location>
    <ligand>
        <name>Mg(2+)</name>
        <dbReference type="ChEBI" id="CHEBI:18420"/>
    </ligand>
</feature>
<feature type="binding site" evidence="1">
    <location>
        <position position="645"/>
    </location>
    <ligand>
        <name>Mg(2+)</name>
        <dbReference type="ChEBI" id="CHEBI:18420"/>
    </ligand>
</feature>
<feature type="binding site" evidence="3">
    <location>
        <position position="709"/>
    </location>
    <ligand>
        <name>Mg(2+)</name>
        <dbReference type="ChEBI" id="CHEBI:18420"/>
    </ligand>
</feature>
<feature type="binding site" evidence="3">
    <location>
        <position position="734"/>
    </location>
    <ligand>
        <name>Mg(2+)</name>
        <dbReference type="ChEBI" id="CHEBI:18420"/>
    </ligand>
</feature>
<feature type="binding site" evidence="3">
    <location>
        <position position="738"/>
    </location>
    <ligand>
        <name>Mg(2+)</name>
        <dbReference type="ChEBI" id="CHEBI:18420"/>
    </ligand>
</feature>
<feature type="sequence conflict" description="In Ref. 1; AAA97139." evidence="7" ref="1">
    <original>PVVLLINGYTKGDWWEA</original>
    <variation>AGGAVNQWLHQRRLVGS</variation>
    <location>
        <begin position="301"/>
        <end position="317"/>
    </location>
</feature>
<feature type="turn" evidence="9">
    <location>
        <begin position="4"/>
        <end position="6"/>
    </location>
</feature>
<feature type="turn" evidence="9">
    <location>
        <begin position="15"/>
        <end position="17"/>
    </location>
</feature>
<feature type="strand" evidence="9">
    <location>
        <begin position="31"/>
        <end position="34"/>
    </location>
</feature>
<feature type="turn" evidence="9">
    <location>
        <begin position="36"/>
        <end position="38"/>
    </location>
</feature>
<feature type="helix" evidence="9">
    <location>
        <begin position="39"/>
        <end position="47"/>
    </location>
</feature>
<feature type="helix" evidence="9">
    <location>
        <begin position="50"/>
        <end position="56"/>
    </location>
</feature>
<feature type="helix" evidence="9">
    <location>
        <begin position="66"/>
        <end position="76"/>
    </location>
</feature>
<feature type="helix" evidence="9">
    <location>
        <begin position="82"/>
        <end position="84"/>
    </location>
</feature>
<feature type="helix" evidence="9">
    <location>
        <begin position="89"/>
        <end position="97"/>
    </location>
</feature>
<feature type="helix" evidence="9">
    <location>
        <begin position="100"/>
        <end position="113"/>
    </location>
</feature>
<feature type="strand" evidence="9">
    <location>
        <begin position="114"/>
        <end position="116"/>
    </location>
</feature>
<feature type="helix" evidence="9">
    <location>
        <begin position="120"/>
        <end position="152"/>
    </location>
</feature>
<feature type="strand" evidence="9">
    <location>
        <begin position="156"/>
        <end position="159"/>
    </location>
</feature>
<feature type="turn" evidence="9">
    <location>
        <begin position="164"/>
        <end position="167"/>
    </location>
</feature>
<feature type="strand" evidence="9">
    <location>
        <begin position="172"/>
        <end position="175"/>
    </location>
</feature>
<feature type="helix" evidence="9">
    <location>
        <begin position="176"/>
        <end position="178"/>
    </location>
</feature>
<feature type="strand" evidence="9">
    <location>
        <begin position="184"/>
        <end position="187"/>
    </location>
</feature>
<feature type="strand" evidence="9">
    <location>
        <begin position="197"/>
        <end position="208"/>
    </location>
</feature>
<feature type="turn" evidence="9">
    <location>
        <begin position="210"/>
        <end position="213"/>
    </location>
</feature>
<feature type="strand" evidence="10">
    <location>
        <begin position="219"/>
        <end position="221"/>
    </location>
</feature>
<feature type="helix" evidence="9">
    <location>
        <begin position="233"/>
        <end position="235"/>
    </location>
</feature>
<feature type="strand" evidence="9">
    <location>
        <begin position="245"/>
        <end position="255"/>
    </location>
</feature>
<feature type="helix" evidence="9">
    <location>
        <begin position="259"/>
        <end position="261"/>
    </location>
</feature>
<feature type="turn" evidence="9">
    <location>
        <begin position="263"/>
        <end position="265"/>
    </location>
</feature>
<feature type="strand" evidence="9">
    <location>
        <begin position="266"/>
        <end position="273"/>
    </location>
</feature>
<feature type="helix" evidence="9">
    <location>
        <begin position="280"/>
        <end position="311"/>
    </location>
</feature>
<feature type="helix" evidence="9">
    <location>
        <begin position="314"/>
        <end position="325"/>
    </location>
</feature>
<feature type="helix" evidence="9">
    <location>
        <begin position="326"/>
        <end position="328"/>
    </location>
</feature>
<feature type="helix" evidence="9">
    <location>
        <begin position="332"/>
        <end position="349"/>
    </location>
</feature>
<feature type="turn" evidence="9">
    <location>
        <begin position="350"/>
        <end position="352"/>
    </location>
</feature>
<feature type="strand" evidence="9">
    <location>
        <begin position="353"/>
        <end position="357"/>
    </location>
</feature>
<feature type="helix" evidence="9">
    <location>
        <begin position="360"/>
        <end position="366"/>
    </location>
</feature>
<feature type="strand" evidence="9">
    <location>
        <begin position="369"/>
        <end position="372"/>
    </location>
</feature>
<feature type="turn" evidence="9">
    <location>
        <begin position="376"/>
        <end position="378"/>
    </location>
</feature>
<feature type="strand" evidence="8">
    <location>
        <begin position="384"/>
        <end position="389"/>
    </location>
</feature>
<feature type="helix" evidence="8">
    <location>
        <begin position="397"/>
        <end position="409"/>
    </location>
</feature>
<feature type="helix" evidence="8">
    <location>
        <begin position="416"/>
        <end position="423"/>
    </location>
</feature>
<feature type="helix" evidence="8">
    <location>
        <begin position="427"/>
        <end position="436"/>
    </location>
</feature>
<feature type="strand" evidence="8">
    <location>
        <begin position="437"/>
        <end position="443"/>
    </location>
</feature>
<feature type="turn" evidence="8">
    <location>
        <begin position="447"/>
        <end position="449"/>
    </location>
</feature>
<feature type="strand" evidence="8">
    <location>
        <begin position="451"/>
        <end position="469"/>
    </location>
</feature>
<feature type="helix" evidence="8">
    <location>
        <begin position="471"/>
        <end position="475"/>
    </location>
</feature>
<feature type="strand" evidence="8">
    <location>
        <begin position="478"/>
        <end position="483"/>
    </location>
</feature>
<feature type="strand" evidence="8">
    <location>
        <begin position="486"/>
        <end position="489"/>
    </location>
</feature>
<feature type="helix" evidence="8">
    <location>
        <begin position="492"/>
        <end position="507"/>
    </location>
</feature>
<feature type="strand" evidence="8">
    <location>
        <begin position="511"/>
        <end position="521"/>
    </location>
</feature>
<feature type="helix" evidence="8">
    <location>
        <begin position="529"/>
        <end position="531"/>
    </location>
</feature>
<feature type="strand" evidence="8">
    <location>
        <begin position="534"/>
        <end position="544"/>
    </location>
</feature>
<feature type="helix" evidence="9">
    <location>
        <begin position="551"/>
        <end position="560"/>
    </location>
</feature>
<feature type="strand" evidence="9">
    <location>
        <begin position="564"/>
        <end position="568"/>
    </location>
</feature>
<feature type="helix" evidence="9">
    <location>
        <begin position="573"/>
        <end position="583"/>
    </location>
</feature>
<feature type="helix" evidence="9">
    <location>
        <begin position="593"/>
        <end position="596"/>
    </location>
</feature>
<feature type="helix" evidence="9">
    <location>
        <begin position="601"/>
        <end position="609"/>
    </location>
</feature>
<feature type="strand" evidence="9">
    <location>
        <begin position="613"/>
        <end position="616"/>
    </location>
</feature>
<feature type="helix" evidence="9">
    <location>
        <begin position="619"/>
        <end position="628"/>
    </location>
</feature>
<feature type="turn" evidence="9">
    <location>
        <begin position="629"/>
        <end position="632"/>
    </location>
</feature>
<feature type="strand" evidence="9">
    <location>
        <begin position="636"/>
        <end position="639"/>
    </location>
</feature>
<feature type="helix" evidence="10">
    <location>
        <begin position="643"/>
        <end position="645"/>
    </location>
</feature>
<feature type="helix" evidence="9">
    <location>
        <begin position="646"/>
        <end position="651"/>
    </location>
</feature>
<feature type="strand" evidence="9">
    <location>
        <begin position="652"/>
        <end position="658"/>
    </location>
</feature>
<feature type="helix" evidence="9">
    <location>
        <begin position="663"/>
        <end position="668"/>
    </location>
</feature>
<feature type="strand" evidence="9">
    <location>
        <begin position="670"/>
        <end position="675"/>
    </location>
</feature>
<feature type="helix" evidence="9">
    <location>
        <begin position="678"/>
        <end position="716"/>
    </location>
</feature>
<feature type="turn" evidence="9">
    <location>
        <begin position="717"/>
        <end position="719"/>
    </location>
</feature>
<feature type="strand" evidence="9">
    <location>
        <begin position="720"/>
        <end position="722"/>
    </location>
</feature>
<feature type="helix" evidence="9">
    <location>
        <begin position="727"/>
        <end position="741"/>
    </location>
</feature>
<feature type="helix" evidence="9">
    <location>
        <begin position="742"/>
        <end position="746"/>
    </location>
</feature>
<feature type="turn" evidence="9">
    <location>
        <begin position="751"/>
        <end position="754"/>
    </location>
</feature>
<feature type="helix" evidence="9">
    <location>
        <begin position="763"/>
        <end position="772"/>
    </location>
</feature>
<feature type="helix" evidence="9">
    <location>
        <begin position="774"/>
        <end position="789"/>
    </location>
</feature>
<feature type="helix" evidence="9">
    <location>
        <begin position="796"/>
        <end position="798"/>
    </location>
</feature>
<feature type="helix" evidence="9">
    <location>
        <begin position="799"/>
        <end position="816"/>
    </location>
</feature>
<feature type="helix" evidence="9">
    <location>
        <begin position="817"/>
        <end position="819"/>
    </location>
</feature>
<feature type="turn" evidence="9">
    <location>
        <begin position="820"/>
        <end position="822"/>
    </location>
</feature>
<feature type="turn" evidence="9">
    <location>
        <begin position="828"/>
        <end position="830"/>
    </location>
</feature>
<feature type="helix" evidence="9">
    <location>
        <begin position="835"/>
        <end position="850"/>
    </location>
</feature>
<feature type="turn" evidence="9">
    <location>
        <begin position="851"/>
        <end position="853"/>
    </location>
</feature>
<feature type="helix" evidence="9">
    <location>
        <begin position="856"/>
        <end position="859"/>
    </location>
</feature>
<feature type="helix" evidence="9">
    <location>
        <begin position="869"/>
        <end position="894"/>
    </location>
</feature>
<evidence type="ECO:0000250" key="1"/>
<evidence type="ECO:0000250" key="2">
    <source>
        <dbReference type="UniProtKB" id="P36640"/>
    </source>
</evidence>
<evidence type="ECO:0000255" key="3"/>
<evidence type="ECO:0000269" key="4">
    <source>
    </source>
</evidence>
<evidence type="ECO:0000269" key="5">
    <source>
    </source>
</evidence>
<evidence type="ECO:0000269" key="6">
    <source>
    </source>
</evidence>
<evidence type="ECO:0000305" key="7"/>
<evidence type="ECO:0007829" key="8">
    <source>
        <dbReference type="PDB" id="3GWI"/>
    </source>
</evidence>
<evidence type="ECO:0007829" key="9">
    <source>
        <dbReference type="PDB" id="8UY7"/>
    </source>
</evidence>
<evidence type="ECO:0007829" key="10">
    <source>
        <dbReference type="PDB" id="8UY8"/>
    </source>
</evidence>
<dbReference type="EC" id="7.2.2.14" evidence="2"/>
<dbReference type="EMBL" id="U14003">
    <property type="protein sequence ID" value="AAA97139.1"/>
    <property type="molecule type" value="Genomic_DNA"/>
</dbReference>
<dbReference type="EMBL" id="U00096">
    <property type="protein sequence ID" value="AAC77199.1"/>
    <property type="molecule type" value="Genomic_DNA"/>
</dbReference>
<dbReference type="EMBL" id="AP009048">
    <property type="protein sequence ID" value="BAE78241.1"/>
    <property type="molecule type" value="Genomic_DNA"/>
</dbReference>
<dbReference type="PIR" id="E65236">
    <property type="entry name" value="E65236"/>
</dbReference>
<dbReference type="RefSeq" id="NP_418663.1">
    <property type="nucleotide sequence ID" value="NC_000913.3"/>
</dbReference>
<dbReference type="RefSeq" id="WP_000471889.1">
    <property type="nucleotide sequence ID" value="NZ_LN832404.1"/>
</dbReference>
<dbReference type="PDB" id="3GWI">
    <property type="method" value="X-ray"/>
    <property type="resolution" value="1.60 A"/>
    <property type="chains" value="A=383-545"/>
</dbReference>
<dbReference type="PDB" id="8UY7">
    <property type="method" value="EM"/>
    <property type="resolution" value="2.93 A"/>
    <property type="chains" value="A/B=1-898"/>
</dbReference>
<dbReference type="PDB" id="8UY8">
    <property type="method" value="EM"/>
    <property type="resolution" value="3.03 A"/>
    <property type="chains" value="A/B=1-898"/>
</dbReference>
<dbReference type="PDB" id="8UY9">
    <property type="method" value="EM"/>
    <property type="resolution" value="3.65 A"/>
    <property type="chains" value="A=1-898"/>
</dbReference>
<dbReference type="PDB" id="8UYA">
    <property type="method" value="EM"/>
    <property type="resolution" value="3.72 A"/>
    <property type="chains" value="A/B=1-898"/>
</dbReference>
<dbReference type="PDB" id="8UYB">
    <property type="method" value="EM"/>
    <property type="resolution" value="3.87 A"/>
    <property type="chains" value="A/B=1-898"/>
</dbReference>
<dbReference type="PDB" id="8UYC">
    <property type="method" value="EM"/>
    <property type="resolution" value="3.75 A"/>
    <property type="chains" value="A/B=1-898"/>
</dbReference>
<dbReference type="PDBsum" id="3GWI"/>
<dbReference type="PDBsum" id="8UY7"/>
<dbReference type="PDBsum" id="8UY8"/>
<dbReference type="PDBsum" id="8UY9"/>
<dbReference type="PDBsum" id="8UYA"/>
<dbReference type="PDBsum" id="8UYB"/>
<dbReference type="PDBsum" id="8UYC"/>
<dbReference type="EMDB" id="EMD-42794"/>
<dbReference type="EMDB" id="EMD-42795"/>
<dbReference type="EMDB" id="EMD-42796"/>
<dbReference type="EMDB" id="EMD-42797"/>
<dbReference type="EMDB" id="EMD-42798"/>
<dbReference type="EMDB" id="EMD-42799"/>
<dbReference type="SMR" id="P0ABB8"/>
<dbReference type="BioGRID" id="4261853">
    <property type="interactions" value="111"/>
</dbReference>
<dbReference type="DIP" id="DIP-48092N"/>
<dbReference type="FunCoup" id="P0ABB8">
    <property type="interactions" value="417"/>
</dbReference>
<dbReference type="IntAct" id="P0ABB8">
    <property type="interactions" value="2"/>
</dbReference>
<dbReference type="STRING" id="511145.b4242"/>
<dbReference type="jPOST" id="P0ABB8"/>
<dbReference type="PaxDb" id="511145-b4242"/>
<dbReference type="EnsemblBacteria" id="AAC77199">
    <property type="protein sequence ID" value="AAC77199"/>
    <property type="gene ID" value="b4242"/>
</dbReference>
<dbReference type="GeneID" id="948778"/>
<dbReference type="KEGG" id="ecj:JW4201"/>
<dbReference type="KEGG" id="eco:b4242"/>
<dbReference type="KEGG" id="ecoc:C3026_22895"/>
<dbReference type="PATRIC" id="fig|1411691.4.peg.2459"/>
<dbReference type="EchoBASE" id="EB2416"/>
<dbReference type="eggNOG" id="COG0474">
    <property type="taxonomic scope" value="Bacteria"/>
</dbReference>
<dbReference type="HOGENOM" id="CLU_002360_6_3_6"/>
<dbReference type="InParanoid" id="P0ABB8"/>
<dbReference type="OMA" id="KMHACET"/>
<dbReference type="OrthoDB" id="9814270at2"/>
<dbReference type="PhylomeDB" id="P0ABB8"/>
<dbReference type="BioCyc" id="EcoCyc:MGTA-MONOMER"/>
<dbReference type="BRENDA" id="7.2.2.14">
    <property type="organism ID" value="2026"/>
</dbReference>
<dbReference type="EvolutionaryTrace" id="P0ABB8"/>
<dbReference type="PRO" id="PR:P0ABB8"/>
<dbReference type="Proteomes" id="UP000000625">
    <property type="component" value="Chromosome"/>
</dbReference>
<dbReference type="GO" id="GO:0043231">
    <property type="term" value="C:intracellular membrane-bounded organelle"/>
    <property type="evidence" value="ECO:0000318"/>
    <property type="project" value="GO_Central"/>
</dbReference>
<dbReference type="GO" id="GO:0005886">
    <property type="term" value="C:plasma membrane"/>
    <property type="evidence" value="ECO:0000314"/>
    <property type="project" value="EcoCyc"/>
</dbReference>
<dbReference type="GO" id="GO:0005524">
    <property type="term" value="F:ATP binding"/>
    <property type="evidence" value="ECO:0000255"/>
    <property type="project" value="EcoCyc"/>
</dbReference>
<dbReference type="GO" id="GO:0016887">
    <property type="term" value="F:ATP hydrolysis activity"/>
    <property type="evidence" value="ECO:0007669"/>
    <property type="project" value="InterPro"/>
</dbReference>
<dbReference type="GO" id="GO:0019829">
    <property type="term" value="F:ATPase-coupled monoatomic cation transmembrane transporter activity"/>
    <property type="evidence" value="ECO:0000318"/>
    <property type="project" value="GO_Central"/>
</dbReference>
<dbReference type="GO" id="GO:0046872">
    <property type="term" value="F:metal ion binding"/>
    <property type="evidence" value="ECO:0007669"/>
    <property type="project" value="UniProtKB-KW"/>
</dbReference>
<dbReference type="GO" id="GO:0015662">
    <property type="term" value="F:P-type ion transporter activity"/>
    <property type="evidence" value="ECO:0000304"/>
    <property type="project" value="EcoCyc"/>
</dbReference>
<dbReference type="GO" id="GO:0015444">
    <property type="term" value="F:P-type magnesium transporter activity"/>
    <property type="evidence" value="ECO:0000266"/>
    <property type="project" value="EcoCyc"/>
</dbReference>
<dbReference type="GO" id="GO:0071286">
    <property type="term" value="P:cellular response to magnesium ion"/>
    <property type="evidence" value="ECO:0000270"/>
    <property type="project" value="EcoCyc"/>
</dbReference>
<dbReference type="GO" id="GO:1903830">
    <property type="term" value="P:magnesium ion transmembrane transport"/>
    <property type="evidence" value="ECO:0000266"/>
    <property type="project" value="EcoCyc"/>
</dbReference>
<dbReference type="CDD" id="cd02077">
    <property type="entry name" value="P-type_ATPase_Mg"/>
    <property type="match status" value="1"/>
</dbReference>
<dbReference type="FunFam" id="2.70.150.10:FF:000045">
    <property type="entry name" value="Magnesium-translocating P-type ATPase"/>
    <property type="match status" value="1"/>
</dbReference>
<dbReference type="FunFam" id="3.40.1110.10:FF:000041">
    <property type="entry name" value="Magnesium-translocating P-type ATPase"/>
    <property type="match status" value="1"/>
</dbReference>
<dbReference type="Gene3D" id="3.40.1110.10">
    <property type="entry name" value="Calcium-transporting ATPase, cytoplasmic domain N"/>
    <property type="match status" value="1"/>
</dbReference>
<dbReference type="Gene3D" id="2.70.150.10">
    <property type="entry name" value="Calcium-transporting ATPase, cytoplasmic transduction domain A"/>
    <property type="match status" value="1"/>
</dbReference>
<dbReference type="Gene3D" id="1.20.1110.10">
    <property type="entry name" value="Calcium-transporting ATPase, transmembrane domain"/>
    <property type="match status" value="1"/>
</dbReference>
<dbReference type="Gene3D" id="3.40.50.1000">
    <property type="entry name" value="HAD superfamily/HAD-like"/>
    <property type="match status" value="1"/>
</dbReference>
<dbReference type="InterPro" id="IPR006068">
    <property type="entry name" value="ATPase_P-typ_cation-transptr_C"/>
</dbReference>
<dbReference type="InterPro" id="IPR004014">
    <property type="entry name" value="ATPase_P-typ_cation-transptr_N"/>
</dbReference>
<dbReference type="InterPro" id="IPR023299">
    <property type="entry name" value="ATPase_P-typ_cyto_dom_N"/>
</dbReference>
<dbReference type="InterPro" id="IPR018303">
    <property type="entry name" value="ATPase_P-typ_P_site"/>
</dbReference>
<dbReference type="InterPro" id="IPR023298">
    <property type="entry name" value="ATPase_P-typ_TM_dom_sf"/>
</dbReference>
<dbReference type="InterPro" id="IPR008250">
    <property type="entry name" value="ATPase_P-typ_transduc_dom_A_sf"/>
</dbReference>
<dbReference type="InterPro" id="IPR036412">
    <property type="entry name" value="HAD-like_sf"/>
</dbReference>
<dbReference type="InterPro" id="IPR023214">
    <property type="entry name" value="HAD_sf"/>
</dbReference>
<dbReference type="InterPro" id="IPR006415">
    <property type="entry name" value="P-type_ATPase_IIIB"/>
</dbReference>
<dbReference type="InterPro" id="IPR001757">
    <property type="entry name" value="P_typ_ATPase"/>
</dbReference>
<dbReference type="InterPro" id="IPR044492">
    <property type="entry name" value="P_typ_ATPase_HD_dom"/>
</dbReference>
<dbReference type="NCBIfam" id="TIGR01524">
    <property type="entry name" value="ATPase-IIIB_Mg"/>
    <property type="match status" value="1"/>
</dbReference>
<dbReference type="NCBIfam" id="TIGR01494">
    <property type="entry name" value="ATPase_P-type"/>
    <property type="match status" value="2"/>
</dbReference>
<dbReference type="NCBIfam" id="NF011702">
    <property type="entry name" value="PRK15122.1"/>
    <property type="match status" value="1"/>
</dbReference>
<dbReference type="PANTHER" id="PTHR42861">
    <property type="entry name" value="CALCIUM-TRANSPORTING ATPASE"/>
    <property type="match status" value="1"/>
</dbReference>
<dbReference type="Pfam" id="PF00689">
    <property type="entry name" value="Cation_ATPase_C"/>
    <property type="match status" value="1"/>
</dbReference>
<dbReference type="Pfam" id="PF00690">
    <property type="entry name" value="Cation_ATPase_N"/>
    <property type="match status" value="1"/>
</dbReference>
<dbReference type="Pfam" id="PF00122">
    <property type="entry name" value="E1-E2_ATPase"/>
    <property type="match status" value="1"/>
</dbReference>
<dbReference type="Pfam" id="PF00702">
    <property type="entry name" value="Hydrolase"/>
    <property type="match status" value="1"/>
</dbReference>
<dbReference type="PRINTS" id="PR01836">
    <property type="entry name" value="MGATPASE"/>
</dbReference>
<dbReference type="SFLD" id="SFLDS00003">
    <property type="entry name" value="Haloacid_Dehalogenase"/>
    <property type="match status" value="1"/>
</dbReference>
<dbReference type="SFLD" id="SFLDF00027">
    <property type="entry name" value="p-type_atpase"/>
    <property type="match status" value="1"/>
</dbReference>
<dbReference type="SMART" id="SM00831">
    <property type="entry name" value="Cation_ATPase_N"/>
    <property type="match status" value="1"/>
</dbReference>
<dbReference type="SUPFAM" id="SSF81653">
    <property type="entry name" value="Calcium ATPase, transduction domain A"/>
    <property type="match status" value="1"/>
</dbReference>
<dbReference type="SUPFAM" id="SSF81665">
    <property type="entry name" value="Calcium ATPase, transmembrane domain M"/>
    <property type="match status" value="1"/>
</dbReference>
<dbReference type="SUPFAM" id="SSF56784">
    <property type="entry name" value="HAD-like"/>
    <property type="match status" value="1"/>
</dbReference>
<dbReference type="SUPFAM" id="SSF81660">
    <property type="entry name" value="Metal cation-transporting ATPase, ATP-binding domain N"/>
    <property type="match status" value="1"/>
</dbReference>
<dbReference type="PROSITE" id="PS00154">
    <property type="entry name" value="ATPASE_E1_E2"/>
    <property type="match status" value="1"/>
</dbReference>
<keyword id="KW-0002">3D-structure</keyword>
<keyword id="KW-0067">ATP-binding</keyword>
<keyword id="KW-0997">Cell inner membrane</keyword>
<keyword id="KW-1003">Cell membrane</keyword>
<keyword id="KW-0460">Magnesium</keyword>
<keyword id="KW-0472">Membrane</keyword>
<keyword id="KW-0479">Metal-binding</keyword>
<keyword id="KW-0547">Nucleotide-binding</keyword>
<keyword id="KW-0597">Phosphoprotein</keyword>
<keyword id="KW-1185">Reference proteome</keyword>
<keyword id="KW-1278">Translocase</keyword>
<keyword id="KW-0812">Transmembrane</keyword>
<keyword id="KW-1133">Transmembrane helix</keyword>
<comment type="function">
    <text evidence="2">Mediates magnesium influx to the cytosol.</text>
</comment>
<comment type="catalytic activity">
    <reaction evidence="2">
        <text>Mg(2+)(out) + ATP + H2O = Mg(2+)(in) + ADP + phosphate + H(+)</text>
        <dbReference type="Rhea" id="RHEA:10260"/>
        <dbReference type="ChEBI" id="CHEBI:15377"/>
        <dbReference type="ChEBI" id="CHEBI:15378"/>
        <dbReference type="ChEBI" id="CHEBI:18420"/>
        <dbReference type="ChEBI" id="CHEBI:30616"/>
        <dbReference type="ChEBI" id="CHEBI:43474"/>
        <dbReference type="ChEBI" id="CHEBI:456216"/>
        <dbReference type="EC" id="7.2.2.14"/>
    </reaction>
</comment>
<comment type="activity regulation">
    <text evidence="6">Upon Mg(2+) depletion, MgtA is stabilized by interaction with MgtS.</text>
</comment>
<comment type="subunit">
    <text evidence="6">Interacts with MgtS.</text>
</comment>
<comment type="subcellular location">
    <subcellularLocation>
        <location evidence="5">Cell inner membrane</location>
        <topology evidence="3">Multi-pass membrane protein</topology>
    </subcellularLocation>
</comment>
<comment type="induction">
    <text evidence="4 7">Induced by low levels of proline and by osmotic shock. The leader of mgtA mRNA functions as a riboswitch, favoring transcription under low Mg(2+) conditions. Under limiting proline levels the MgtL peptide encoded within the mgtA leader cannot be translated, thereby favoring the transcription of the mgtA ORF. Induction by osmotic shock also depends on translational regulation by MgtL (Probable). Induced by low extracellular levels of Mg(2+) via the PhoQ/PhoP two-component regulatory system.</text>
</comment>
<comment type="similarity">
    <text evidence="7">Belongs to the cation transport ATPase (P-type) (TC 3.A.3) family. Type IIIB subfamily.</text>
</comment>
<organism>
    <name type="scientific">Escherichia coli (strain K12)</name>
    <dbReference type="NCBI Taxonomy" id="83333"/>
    <lineage>
        <taxon>Bacteria</taxon>
        <taxon>Pseudomonadati</taxon>
        <taxon>Pseudomonadota</taxon>
        <taxon>Gammaproteobacteria</taxon>
        <taxon>Enterobacterales</taxon>
        <taxon>Enterobacteriaceae</taxon>
        <taxon>Escherichia</taxon>
    </lineage>
</organism>
<proteinExistence type="evidence at protein level"/>